<evidence type="ECO:0000250" key="1"/>
<evidence type="ECO:0000305" key="2"/>
<name>APT_KLULA</name>
<accession>Q6CWV0</accession>
<proteinExistence type="inferred from homology"/>
<dbReference type="EC" id="2.4.2.7"/>
<dbReference type="EMBL" id="CR382122">
    <property type="protein sequence ID" value="CAH01982.1"/>
    <property type="molecule type" value="Genomic_DNA"/>
</dbReference>
<dbReference type="RefSeq" id="XP_451589.1">
    <property type="nucleotide sequence ID" value="XM_451589.1"/>
</dbReference>
<dbReference type="SMR" id="Q6CWV0"/>
<dbReference type="FunCoup" id="Q6CWV0">
    <property type="interactions" value="591"/>
</dbReference>
<dbReference type="STRING" id="284590.Q6CWV0"/>
<dbReference type="PaxDb" id="284590-Q6CWV0"/>
<dbReference type="KEGG" id="kla:KLLA0_B01309g"/>
<dbReference type="eggNOG" id="KOG1712">
    <property type="taxonomic scope" value="Eukaryota"/>
</dbReference>
<dbReference type="HOGENOM" id="CLU_063339_1_0_1"/>
<dbReference type="InParanoid" id="Q6CWV0"/>
<dbReference type="OMA" id="ITHFVYH"/>
<dbReference type="UniPathway" id="UPA00588">
    <property type="reaction ID" value="UER00646"/>
</dbReference>
<dbReference type="Proteomes" id="UP000000598">
    <property type="component" value="Chromosome B"/>
</dbReference>
<dbReference type="GO" id="GO:0005737">
    <property type="term" value="C:cytoplasm"/>
    <property type="evidence" value="ECO:0007669"/>
    <property type="project" value="UniProtKB-SubCell"/>
</dbReference>
<dbReference type="GO" id="GO:0005634">
    <property type="term" value="C:nucleus"/>
    <property type="evidence" value="ECO:0007669"/>
    <property type="project" value="UniProtKB-SubCell"/>
</dbReference>
<dbReference type="GO" id="GO:0002055">
    <property type="term" value="F:adenine binding"/>
    <property type="evidence" value="ECO:0007669"/>
    <property type="project" value="TreeGrafter"/>
</dbReference>
<dbReference type="GO" id="GO:0003999">
    <property type="term" value="F:adenine phosphoribosyltransferase activity"/>
    <property type="evidence" value="ECO:0007669"/>
    <property type="project" value="UniProtKB-EC"/>
</dbReference>
<dbReference type="GO" id="GO:0016208">
    <property type="term" value="F:AMP binding"/>
    <property type="evidence" value="ECO:0007669"/>
    <property type="project" value="TreeGrafter"/>
</dbReference>
<dbReference type="GO" id="GO:0046872">
    <property type="term" value="F:metal ion binding"/>
    <property type="evidence" value="ECO:0007669"/>
    <property type="project" value="UniProtKB-KW"/>
</dbReference>
<dbReference type="GO" id="GO:0006168">
    <property type="term" value="P:adenine salvage"/>
    <property type="evidence" value="ECO:0007669"/>
    <property type="project" value="InterPro"/>
</dbReference>
<dbReference type="GO" id="GO:0044209">
    <property type="term" value="P:AMP salvage"/>
    <property type="evidence" value="ECO:0007669"/>
    <property type="project" value="UniProtKB-UniPathway"/>
</dbReference>
<dbReference type="GO" id="GO:0006166">
    <property type="term" value="P:purine ribonucleoside salvage"/>
    <property type="evidence" value="ECO:0007669"/>
    <property type="project" value="UniProtKB-KW"/>
</dbReference>
<dbReference type="CDD" id="cd06223">
    <property type="entry name" value="PRTases_typeI"/>
    <property type="match status" value="1"/>
</dbReference>
<dbReference type="FunFam" id="3.40.50.2020:FF:000004">
    <property type="entry name" value="Adenine phosphoribosyltransferase"/>
    <property type="match status" value="1"/>
</dbReference>
<dbReference type="Gene3D" id="3.40.50.2020">
    <property type="match status" value="1"/>
</dbReference>
<dbReference type="HAMAP" id="MF_00004">
    <property type="entry name" value="Aden_phosphoribosyltr"/>
    <property type="match status" value="1"/>
</dbReference>
<dbReference type="InterPro" id="IPR005764">
    <property type="entry name" value="Ade_phspho_trans"/>
</dbReference>
<dbReference type="InterPro" id="IPR000836">
    <property type="entry name" value="PRibTrfase_dom"/>
</dbReference>
<dbReference type="InterPro" id="IPR029057">
    <property type="entry name" value="PRTase-like"/>
</dbReference>
<dbReference type="InterPro" id="IPR050054">
    <property type="entry name" value="UPRTase/APRTase"/>
</dbReference>
<dbReference type="NCBIfam" id="TIGR01090">
    <property type="entry name" value="apt"/>
    <property type="match status" value="1"/>
</dbReference>
<dbReference type="NCBIfam" id="NF002636">
    <property type="entry name" value="PRK02304.1-5"/>
    <property type="match status" value="1"/>
</dbReference>
<dbReference type="PANTHER" id="PTHR32315">
    <property type="entry name" value="ADENINE PHOSPHORIBOSYLTRANSFERASE"/>
    <property type="match status" value="1"/>
</dbReference>
<dbReference type="PANTHER" id="PTHR32315:SF3">
    <property type="entry name" value="ADENINE PHOSPHORIBOSYLTRANSFERASE"/>
    <property type="match status" value="1"/>
</dbReference>
<dbReference type="Pfam" id="PF00156">
    <property type="entry name" value="Pribosyltran"/>
    <property type="match status" value="1"/>
</dbReference>
<dbReference type="SUPFAM" id="SSF53271">
    <property type="entry name" value="PRTase-like"/>
    <property type="match status" value="1"/>
</dbReference>
<dbReference type="PROSITE" id="PS00103">
    <property type="entry name" value="PUR_PYR_PR_TRANSFER"/>
    <property type="match status" value="1"/>
</dbReference>
<protein>
    <recommendedName>
        <fullName>Adenine phosphoribosyltransferase</fullName>
        <shortName>APRT</shortName>
        <ecNumber>2.4.2.7</ecNumber>
    </recommendedName>
</protein>
<sequence length="187" mass="20643">MSITEYATELKGALRQYPNFPQEGILFEDFLPIFRDPQLFKKLIESFKLHLQEKFTGKKIDYVIGLEARGFLFGPALALALDAGFVPVRKQGKLAGEVVHAVYAKEYGEDVFEIQADSIPEHSNVVIVDDIIATGGSAKAAGDLALQLNANILEFCFVMELDFLKGTQKLQAPSFTLLSGQEEALSK</sequence>
<organism>
    <name type="scientific">Kluyveromyces lactis (strain ATCC 8585 / CBS 2359 / DSM 70799 / NBRC 1267 / NRRL Y-1140 / WM37)</name>
    <name type="common">Yeast</name>
    <name type="synonym">Candida sphaerica</name>
    <dbReference type="NCBI Taxonomy" id="284590"/>
    <lineage>
        <taxon>Eukaryota</taxon>
        <taxon>Fungi</taxon>
        <taxon>Dikarya</taxon>
        <taxon>Ascomycota</taxon>
        <taxon>Saccharomycotina</taxon>
        <taxon>Saccharomycetes</taxon>
        <taxon>Saccharomycetales</taxon>
        <taxon>Saccharomycetaceae</taxon>
        <taxon>Kluyveromyces</taxon>
    </lineage>
</organism>
<feature type="chain" id="PRO_0000227901" description="Adenine phosphoribosyltransferase">
    <location>
        <begin position="1"/>
        <end position="187"/>
    </location>
</feature>
<feature type="binding site" evidence="1">
    <location>
        <begin position="133"/>
        <end position="137"/>
    </location>
    <ligand>
        <name>AMP</name>
        <dbReference type="ChEBI" id="CHEBI:456215"/>
    </ligand>
</feature>
<gene>
    <name type="primary">APT1</name>
    <name type="ordered locus">KLLA0B01309g</name>
</gene>
<comment type="function">
    <text evidence="1">Catalyzes a salvage reaction resulting in the formation of AMP, that is energically less costly than de novo synthesis.</text>
</comment>
<comment type="catalytic activity">
    <reaction>
        <text>AMP + diphosphate = 5-phospho-alpha-D-ribose 1-diphosphate + adenine</text>
        <dbReference type="Rhea" id="RHEA:16609"/>
        <dbReference type="ChEBI" id="CHEBI:16708"/>
        <dbReference type="ChEBI" id="CHEBI:33019"/>
        <dbReference type="ChEBI" id="CHEBI:58017"/>
        <dbReference type="ChEBI" id="CHEBI:456215"/>
        <dbReference type="EC" id="2.4.2.7"/>
    </reaction>
</comment>
<comment type="cofactor">
    <cofactor evidence="1">
        <name>Mg(2+)</name>
        <dbReference type="ChEBI" id="CHEBI:18420"/>
    </cofactor>
</comment>
<comment type="pathway">
    <text>Purine metabolism; AMP biosynthesis via salvage pathway; AMP from adenine: step 1/1.</text>
</comment>
<comment type="subunit">
    <text evidence="1">Homodimer.</text>
</comment>
<comment type="subcellular location">
    <subcellularLocation>
        <location evidence="1">Cytoplasm</location>
    </subcellularLocation>
    <subcellularLocation>
        <location evidence="1">Nucleus</location>
    </subcellularLocation>
</comment>
<comment type="similarity">
    <text evidence="2">Belongs to the purine/pyrimidine phosphoribosyltransferase family.</text>
</comment>
<reference key="1">
    <citation type="journal article" date="2004" name="Nature">
        <title>Genome evolution in yeasts.</title>
        <authorList>
            <person name="Dujon B."/>
            <person name="Sherman D."/>
            <person name="Fischer G."/>
            <person name="Durrens P."/>
            <person name="Casaregola S."/>
            <person name="Lafontaine I."/>
            <person name="de Montigny J."/>
            <person name="Marck C."/>
            <person name="Neuveglise C."/>
            <person name="Talla E."/>
            <person name="Goffard N."/>
            <person name="Frangeul L."/>
            <person name="Aigle M."/>
            <person name="Anthouard V."/>
            <person name="Babour A."/>
            <person name="Barbe V."/>
            <person name="Barnay S."/>
            <person name="Blanchin S."/>
            <person name="Beckerich J.-M."/>
            <person name="Beyne E."/>
            <person name="Bleykasten C."/>
            <person name="Boisrame A."/>
            <person name="Boyer J."/>
            <person name="Cattolico L."/>
            <person name="Confanioleri F."/>
            <person name="de Daruvar A."/>
            <person name="Despons L."/>
            <person name="Fabre E."/>
            <person name="Fairhead C."/>
            <person name="Ferry-Dumazet H."/>
            <person name="Groppi A."/>
            <person name="Hantraye F."/>
            <person name="Hennequin C."/>
            <person name="Jauniaux N."/>
            <person name="Joyet P."/>
            <person name="Kachouri R."/>
            <person name="Kerrest A."/>
            <person name="Koszul R."/>
            <person name="Lemaire M."/>
            <person name="Lesur I."/>
            <person name="Ma L."/>
            <person name="Muller H."/>
            <person name="Nicaud J.-M."/>
            <person name="Nikolski M."/>
            <person name="Oztas S."/>
            <person name="Ozier-Kalogeropoulos O."/>
            <person name="Pellenz S."/>
            <person name="Potier S."/>
            <person name="Richard G.-F."/>
            <person name="Straub M.-L."/>
            <person name="Suleau A."/>
            <person name="Swennen D."/>
            <person name="Tekaia F."/>
            <person name="Wesolowski-Louvel M."/>
            <person name="Westhof E."/>
            <person name="Wirth B."/>
            <person name="Zeniou-Meyer M."/>
            <person name="Zivanovic Y."/>
            <person name="Bolotin-Fukuhara M."/>
            <person name="Thierry A."/>
            <person name="Bouchier C."/>
            <person name="Caudron B."/>
            <person name="Scarpelli C."/>
            <person name="Gaillardin C."/>
            <person name="Weissenbach J."/>
            <person name="Wincker P."/>
            <person name="Souciet J.-L."/>
        </authorList>
    </citation>
    <scope>NUCLEOTIDE SEQUENCE [LARGE SCALE GENOMIC DNA]</scope>
    <source>
        <strain>ATCC 8585 / CBS 2359 / DSM 70799 / NBRC 1267 / NRRL Y-1140 / WM37</strain>
    </source>
</reference>
<keyword id="KW-0963">Cytoplasm</keyword>
<keyword id="KW-0328">Glycosyltransferase</keyword>
<keyword id="KW-0460">Magnesium</keyword>
<keyword id="KW-0479">Metal-binding</keyword>
<keyword id="KW-0539">Nucleus</keyword>
<keyword id="KW-0660">Purine salvage</keyword>
<keyword id="KW-1185">Reference proteome</keyword>
<keyword id="KW-0808">Transferase</keyword>